<proteinExistence type="evidence at protein level"/>
<protein>
    <recommendedName>
        <fullName evidence="7">WD repeat domain phosphoinositide-interacting protein 2</fullName>
        <shortName>WIPI-2</shortName>
    </recommendedName>
</protein>
<keyword id="KW-0072">Autophagy</keyword>
<keyword id="KW-0446">Lipid-binding</keyword>
<keyword id="KW-0472">Membrane</keyword>
<keyword id="KW-0597">Phosphoprotein</keyword>
<keyword id="KW-1185">Reference proteome</keyword>
<keyword id="KW-0677">Repeat</keyword>
<keyword id="KW-0853">WD repeat</keyword>
<feature type="chain" id="PRO_0000051441" description="WD repeat domain phosphoinositide-interacting protein 2">
    <location>
        <begin position="1"/>
        <end position="445"/>
    </location>
</feature>
<feature type="repeat" description="WD 1" evidence="2">
    <location>
        <begin position="182"/>
        <end position="222"/>
    </location>
</feature>
<feature type="repeat" description="WD 2" evidence="2">
    <location>
        <begin position="228"/>
        <end position="267"/>
    </location>
</feature>
<feature type="repeat" description="WD 3" evidence="2">
    <location>
        <begin position="311"/>
        <end position="349"/>
    </location>
</feature>
<feature type="short sequence motif" description="L/FRRG motif" evidence="6">
    <location>
        <begin position="223"/>
        <end position="226"/>
    </location>
</feature>
<feature type="modified residue" description="Phosphoserine" evidence="1">
    <location>
        <position position="395"/>
    </location>
</feature>
<gene>
    <name evidence="8" type="primary">Wipi2</name>
</gene>
<dbReference type="EMBL" id="AK155113">
    <property type="protein sequence ID" value="BAE33057.1"/>
    <property type="molecule type" value="mRNA"/>
</dbReference>
<dbReference type="EMBL" id="AK169051">
    <property type="protein sequence ID" value="BAE40839.1"/>
    <property type="molecule type" value="mRNA"/>
</dbReference>
<dbReference type="EMBL" id="AK172030">
    <property type="protein sequence ID" value="BAE42786.1"/>
    <property type="molecule type" value="mRNA"/>
</dbReference>
<dbReference type="EMBL" id="BC044894">
    <property type="protein sequence ID" value="AAH44894.1"/>
    <property type="molecule type" value="mRNA"/>
</dbReference>
<dbReference type="CCDS" id="CCDS19828.1"/>
<dbReference type="RefSeq" id="NP_848485.1">
    <property type="nucleotide sequence ID" value="NM_178398.5"/>
</dbReference>
<dbReference type="SMR" id="Q80W47"/>
<dbReference type="BioGRID" id="217015">
    <property type="interactions" value="27"/>
</dbReference>
<dbReference type="FunCoup" id="Q80W47">
    <property type="interactions" value="3725"/>
</dbReference>
<dbReference type="IntAct" id="Q80W47">
    <property type="interactions" value="10"/>
</dbReference>
<dbReference type="STRING" id="10090.ENSMUSP00000045201"/>
<dbReference type="GlyGen" id="Q80W47">
    <property type="glycosylation" value="1 site, 1 O-linked glycan (1 site)"/>
</dbReference>
<dbReference type="iPTMnet" id="Q80W47"/>
<dbReference type="PhosphoSitePlus" id="Q80W47"/>
<dbReference type="SwissPalm" id="Q80W47"/>
<dbReference type="jPOST" id="Q80W47"/>
<dbReference type="PaxDb" id="10090-ENSMUSP00000045201"/>
<dbReference type="PeptideAtlas" id="Q80W47"/>
<dbReference type="ProteomicsDB" id="297560"/>
<dbReference type="Pumba" id="Q80W47"/>
<dbReference type="Antibodypedia" id="11278">
    <property type="antibodies" value="329 antibodies from 34 providers"/>
</dbReference>
<dbReference type="DNASU" id="74781"/>
<dbReference type="Ensembl" id="ENSMUST00000036872.16">
    <property type="protein sequence ID" value="ENSMUSP00000045201.10"/>
    <property type="gene ID" value="ENSMUSG00000029578.16"/>
</dbReference>
<dbReference type="GeneID" id="74781"/>
<dbReference type="KEGG" id="mmu:74781"/>
<dbReference type="UCSC" id="uc009aiy.1">
    <property type="organism name" value="mouse"/>
</dbReference>
<dbReference type="AGR" id="MGI:1923831"/>
<dbReference type="CTD" id="26100"/>
<dbReference type="MGI" id="MGI:1923831">
    <property type="gene designation" value="Wipi2"/>
</dbReference>
<dbReference type="VEuPathDB" id="HostDB:ENSMUSG00000029578"/>
<dbReference type="eggNOG" id="KOG2110">
    <property type="taxonomic scope" value="Eukaryota"/>
</dbReference>
<dbReference type="GeneTree" id="ENSGT00940000155537"/>
<dbReference type="InParanoid" id="Q80W47"/>
<dbReference type="OrthoDB" id="1667587at2759"/>
<dbReference type="PhylomeDB" id="Q80W47"/>
<dbReference type="TreeFam" id="TF314879"/>
<dbReference type="Reactome" id="R-MMU-1632852">
    <property type="pathway name" value="Macroautophagy"/>
</dbReference>
<dbReference type="BioGRID-ORCS" id="74781">
    <property type="hits" value="17 hits in 63 CRISPR screens"/>
</dbReference>
<dbReference type="ChiTaRS" id="Wipi2">
    <property type="organism name" value="mouse"/>
</dbReference>
<dbReference type="PRO" id="PR:Q80W47"/>
<dbReference type="Proteomes" id="UP000000589">
    <property type="component" value="Chromosome 5"/>
</dbReference>
<dbReference type="RNAct" id="Q80W47">
    <property type="molecule type" value="protein"/>
</dbReference>
<dbReference type="Bgee" id="ENSMUSG00000029578">
    <property type="expression patterns" value="Expressed in spermatocyte and 273 other cell types or tissues"/>
</dbReference>
<dbReference type="ExpressionAtlas" id="Q80W47">
    <property type="expression patterns" value="baseline and differential"/>
</dbReference>
<dbReference type="GO" id="GO:0005776">
    <property type="term" value="C:autophagosome"/>
    <property type="evidence" value="ECO:0000314"/>
    <property type="project" value="MGI"/>
</dbReference>
<dbReference type="GO" id="GO:0005829">
    <property type="term" value="C:cytosol"/>
    <property type="evidence" value="ECO:0000250"/>
    <property type="project" value="UniProtKB"/>
</dbReference>
<dbReference type="GO" id="GO:0000407">
    <property type="term" value="C:phagophore assembly site"/>
    <property type="evidence" value="ECO:0000314"/>
    <property type="project" value="MGI"/>
</dbReference>
<dbReference type="GO" id="GO:0034045">
    <property type="term" value="C:phagophore assembly site membrane"/>
    <property type="evidence" value="ECO:0000250"/>
    <property type="project" value="UniProtKB"/>
</dbReference>
<dbReference type="GO" id="GO:0080025">
    <property type="term" value="F:phosphatidylinositol-3,5-bisphosphate binding"/>
    <property type="evidence" value="ECO:0000250"/>
    <property type="project" value="UniProtKB"/>
</dbReference>
<dbReference type="GO" id="GO:0032266">
    <property type="term" value="F:phosphatidylinositol-3-phosphate binding"/>
    <property type="evidence" value="ECO:0000314"/>
    <property type="project" value="MGI"/>
</dbReference>
<dbReference type="GO" id="GO:0000045">
    <property type="term" value="P:autophagosome assembly"/>
    <property type="evidence" value="ECO:0000250"/>
    <property type="project" value="UniProtKB"/>
</dbReference>
<dbReference type="GO" id="GO:0009267">
    <property type="term" value="P:cellular response to starvation"/>
    <property type="evidence" value="ECO:0000250"/>
    <property type="project" value="UniProtKB"/>
</dbReference>
<dbReference type="GO" id="GO:0034497">
    <property type="term" value="P:protein localization to phagophore assembly site"/>
    <property type="evidence" value="ECO:0000353"/>
    <property type="project" value="MGI"/>
</dbReference>
<dbReference type="GO" id="GO:0098792">
    <property type="term" value="P:xenophagy"/>
    <property type="evidence" value="ECO:0000353"/>
    <property type="project" value="MGI"/>
</dbReference>
<dbReference type="FunFam" id="2.130.10.10:FF:000145">
    <property type="entry name" value="WD repeat domain phosphoinositide-interacting protein 2"/>
    <property type="match status" value="1"/>
</dbReference>
<dbReference type="Gene3D" id="2.130.10.10">
    <property type="entry name" value="YVTN repeat-like/Quinoprotein amine dehydrogenase"/>
    <property type="match status" value="1"/>
</dbReference>
<dbReference type="InterPro" id="IPR048720">
    <property type="entry name" value="PROPPIN"/>
</dbReference>
<dbReference type="InterPro" id="IPR015943">
    <property type="entry name" value="WD40/YVTN_repeat-like_dom_sf"/>
</dbReference>
<dbReference type="InterPro" id="IPR036322">
    <property type="entry name" value="WD40_repeat_dom_sf"/>
</dbReference>
<dbReference type="InterPro" id="IPR001680">
    <property type="entry name" value="WD40_rpt"/>
</dbReference>
<dbReference type="PANTHER" id="PTHR11227">
    <property type="entry name" value="WD-REPEAT PROTEIN INTERACTING WITH PHOSPHOINOSIDES WIPI -RELATED"/>
    <property type="match status" value="1"/>
</dbReference>
<dbReference type="Pfam" id="PF21032">
    <property type="entry name" value="PROPPIN"/>
    <property type="match status" value="1"/>
</dbReference>
<dbReference type="SMART" id="SM00320">
    <property type="entry name" value="WD40"/>
    <property type="match status" value="3"/>
</dbReference>
<dbReference type="SUPFAM" id="SSF50978">
    <property type="entry name" value="WD40 repeat-like"/>
    <property type="match status" value="1"/>
</dbReference>
<comment type="function">
    <text evidence="1 3 4 5">Component of the autophagy machinery that controls the major intracellular degradation process by which cytoplasmic materials are packaged into autophagosomes and delivered to lysosomes for degradation. Involved in an early step of the formation of preautophagosomal structures. Binds and is activated by phosphatidylinositol 3-phosphate (PtdIns3P) forming on membranes of the endoplasmic reticulum upon activation of the upstream ULK1 and PI3 kinases (PubMed:23051912, PubMed:23291478, PubMed:24954904). Mediates ER-isolation membranes contacts by interacting with the ULK1:RB1CC1 complex and PtdIns3P (By similarity). Once activated, WIPI2 recruits at phagophore assembly sites the ATG12-ATG5-ATG16L1 complex that directly controls the elongation of the nascent autophagosomal membrane.</text>
</comment>
<comment type="subunit">
    <text evidence="1 5">Interacts with TECPR1 (By similarity). Interacts with ATG16L1 (PubMed:24954904). Interacts with ATG5 (By similarity). Interacts with WIPI1 (By similarity). Interacts with WDR45 (By similarity). May interact with NUDC (By similarity). Interacts with ULK1 and RB1CC1 (By similarity).</text>
</comment>
<comment type="subcellular location">
    <subcellularLocation>
        <location evidence="3 4 5">Preautophagosomal structure membrane</location>
        <topology evidence="1">Peripheral membrane protein</topology>
        <orientation evidence="1">Cytoplasmic side</orientation>
    </subcellularLocation>
    <text evidence="1">Localizes to omegasomes membranes which are endoplasmic reticulum connected structures at the origin of preautophagosomal structures. Enriched at preautophagosomal structure membranes in response to PtdIns3P.</text>
</comment>
<comment type="domain">
    <text evidence="5">The L/FRRG motif is required for recruitment to PtdIns3P.</text>
</comment>
<comment type="similarity">
    <text evidence="7">Belongs to the WD repeat PROPPIN family.</text>
</comment>
<sequence length="445" mass="48477">MNLASQSGEAGAGQLLFANFNQDNTSLAVGSKSGYKFFSLSSVDKLEQIYECTDTEDVCIVERLFSSSLVAIVSLKAPRKLKVCHFKKGTEICNYSYSNTILAVKLNRQRLIVCLEESLYIHNIRDMKVLHTIRETPPNPAGLCALSINNDNCYLAYPGSASIGEVQVFDTINLRAANMIPAHDSPLAALAFDASGTKLATASEKGTVIRVFSIPEGQKLFEFRRGVKRCVSICSLAFSMDGMFLSASSNTETVHIFKLEAVREKPPEEPTTWTGYFGKVLMASTSYLPSQVTEMFNQGRAFATVRLPFCGHKNICSLTTIQKIPRLLVGASDGYLYMYNLDPQEGGECALMRQHRLDGSMETTSEIVDSASHDCPLATQTYGTAAAKGAYVPSSPTRLGKGQDANLEAYTDDLGAVGGACLEDEASALRLDEDSEHPPMILRTD</sequence>
<name>WIPI2_MOUSE</name>
<accession>Q80W47</accession>
<reference key="1">
    <citation type="journal article" date="2005" name="Science">
        <title>The transcriptional landscape of the mammalian genome.</title>
        <authorList>
            <person name="Carninci P."/>
            <person name="Kasukawa T."/>
            <person name="Katayama S."/>
            <person name="Gough J."/>
            <person name="Frith M.C."/>
            <person name="Maeda N."/>
            <person name="Oyama R."/>
            <person name="Ravasi T."/>
            <person name="Lenhard B."/>
            <person name="Wells C."/>
            <person name="Kodzius R."/>
            <person name="Shimokawa K."/>
            <person name="Bajic V.B."/>
            <person name="Brenner S.E."/>
            <person name="Batalov S."/>
            <person name="Forrest A.R."/>
            <person name="Zavolan M."/>
            <person name="Davis M.J."/>
            <person name="Wilming L.G."/>
            <person name="Aidinis V."/>
            <person name="Allen J.E."/>
            <person name="Ambesi-Impiombato A."/>
            <person name="Apweiler R."/>
            <person name="Aturaliya R.N."/>
            <person name="Bailey T.L."/>
            <person name="Bansal M."/>
            <person name="Baxter L."/>
            <person name="Beisel K.W."/>
            <person name="Bersano T."/>
            <person name="Bono H."/>
            <person name="Chalk A.M."/>
            <person name="Chiu K.P."/>
            <person name="Choudhary V."/>
            <person name="Christoffels A."/>
            <person name="Clutterbuck D.R."/>
            <person name="Crowe M.L."/>
            <person name="Dalla E."/>
            <person name="Dalrymple B.P."/>
            <person name="de Bono B."/>
            <person name="Della Gatta G."/>
            <person name="di Bernardo D."/>
            <person name="Down T."/>
            <person name="Engstrom P."/>
            <person name="Fagiolini M."/>
            <person name="Faulkner G."/>
            <person name="Fletcher C.F."/>
            <person name="Fukushima T."/>
            <person name="Furuno M."/>
            <person name="Futaki S."/>
            <person name="Gariboldi M."/>
            <person name="Georgii-Hemming P."/>
            <person name="Gingeras T.R."/>
            <person name="Gojobori T."/>
            <person name="Green R.E."/>
            <person name="Gustincich S."/>
            <person name="Harbers M."/>
            <person name="Hayashi Y."/>
            <person name="Hensch T.K."/>
            <person name="Hirokawa N."/>
            <person name="Hill D."/>
            <person name="Huminiecki L."/>
            <person name="Iacono M."/>
            <person name="Ikeo K."/>
            <person name="Iwama A."/>
            <person name="Ishikawa T."/>
            <person name="Jakt M."/>
            <person name="Kanapin A."/>
            <person name="Katoh M."/>
            <person name="Kawasawa Y."/>
            <person name="Kelso J."/>
            <person name="Kitamura H."/>
            <person name="Kitano H."/>
            <person name="Kollias G."/>
            <person name="Krishnan S.P."/>
            <person name="Kruger A."/>
            <person name="Kummerfeld S.K."/>
            <person name="Kurochkin I.V."/>
            <person name="Lareau L.F."/>
            <person name="Lazarevic D."/>
            <person name="Lipovich L."/>
            <person name="Liu J."/>
            <person name="Liuni S."/>
            <person name="McWilliam S."/>
            <person name="Madan Babu M."/>
            <person name="Madera M."/>
            <person name="Marchionni L."/>
            <person name="Matsuda H."/>
            <person name="Matsuzawa S."/>
            <person name="Miki H."/>
            <person name="Mignone F."/>
            <person name="Miyake S."/>
            <person name="Morris K."/>
            <person name="Mottagui-Tabar S."/>
            <person name="Mulder N."/>
            <person name="Nakano N."/>
            <person name="Nakauchi H."/>
            <person name="Ng P."/>
            <person name="Nilsson R."/>
            <person name="Nishiguchi S."/>
            <person name="Nishikawa S."/>
            <person name="Nori F."/>
            <person name="Ohara O."/>
            <person name="Okazaki Y."/>
            <person name="Orlando V."/>
            <person name="Pang K.C."/>
            <person name="Pavan W.J."/>
            <person name="Pavesi G."/>
            <person name="Pesole G."/>
            <person name="Petrovsky N."/>
            <person name="Piazza S."/>
            <person name="Reed J."/>
            <person name="Reid J.F."/>
            <person name="Ring B.Z."/>
            <person name="Ringwald M."/>
            <person name="Rost B."/>
            <person name="Ruan Y."/>
            <person name="Salzberg S.L."/>
            <person name="Sandelin A."/>
            <person name="Schneider C."/>
            <person name="Schoenbach C."/>
            <person name="Sekiguchi K."/>
            <person name="Semple C.A."/>
            <person name="Seno S."/>
            <person name="Sessa L."/>
            <person name="Sheng Y."/>
            <person name="Shibata Y."/>
            <person name="Shimada H."/>
            <person name="Shimada K."/>
            <person name="Silva D."/>
            <person name="Sinclair B."/>
            <person name="Sperling S."/>
            <person name="Stupka E."/>
            <person name="Sugiura K."/>
            <person name="Sultana R."/>
            <person name="Takenaka Y."/>
            <person name="Taki K."/>
            <person name="Tammoja K."/>
            <person name="Tan S.L."/>
            <person name="Tang S."/>
            <person name="Taylor M.S."/>
            <person name="Tegner J."/>
            <person name="Teichmann S.A."/>
            <person name="Ueda H.R."/>
            <person name="van Nimwegen E."/>
            <person name="Verardo R."/>
            <person name="Wei C.L."/>
            <person name="Yagi K."/>
            <person name="Yamanishi H."/>
            <person name="Zabarovsky E."/>
            <person name="Zhu S."/>
            <person name="Zimmer A."/>
            <person name="Hide W."/>
            <person name="Bult C."/>
            <person name="Grimmond S.M."/>
            <person name="Teasdale R.D."/>
            <person name="Liu E.T."/>
            <person name="Brusic V."/>
            <person name="Quackenbush J."/>
            <person name="Wahlestedt C."/>
            <person name="Mattick J.S."/>
            <person name="Hume D.A."/>
            <person name="Kai C."/>
            <person name="Sasaki D."/>
            <person name="Tomaru Y."/>
            <person name="Fukuda S."/>
            <person name="Kanamori-Katayama M."/>
            <person name="Suzuki M."/>
            <person name="Aoki J."/>
            <person name="Arakawa T."/>
            <person name="Iida J."/>
            <person name="Imamura K."/>
            <person name="Itoh M."/>
            <person name="Kato T."/>
            <person name="Kawaji H."/>
            <person name="Kawagashira N."/>
            <person name="Kawashima T."/>
            <person name="Kojima M."/>
            <person name="Kondo S."/>
            <person name="Konno H."/>
            <person name="Nakano K."/>
            <person name="Ninomiya N."/>
            <person name="Nishio T."/>
            <person name="Okada M."/>
            <person name="Plessy C."/>
            <person name="Shibata K."/>
            <person name="Shiraki T."/>
            <person name="Suzuki S."/>
            <person name="Tagami M."/>
            <person name="Waki K."/>
            <person name="Watahiki A."/>
            <person name="Okamura-Oho Y."/>
            <person name="Suzuki H."/>
            <person name="Kawai J."/>
            <person name="Hayashizaki Y."/>
        </authorList>
    </citation>
    <scope>NUCLEOTIDE SEQUENCE [LARGE SCALE MRNA]</scope>
    <source>
        <strain>C57BL/6J</strain>
        <strain>NOD</strain>
        <tissue>Amnion</tissue>
        <tissue>Spleen</tissue>
    </source>
</reference>
<reference key="2">
    <citation type="journal article" date="2004" name="Genome Res.">
        <title>The status, quality, and expansion of the NIH full-length cDNA project: the Mammalian Gene Collection (MGC).</title>
        <authorList>
            <consortium name="The MGC Project Team"/>
        </authorList>
    </citation>
    <scope>NUCLEOTIDE SEQUENCE [LARGE SCALE MRNA]</scope>
    <source>
        <strain>FVB/N</strain>
        <tissue>Kidney</tissue>
    </source>
</reference>
<reference key="3">
    <citation type="journal article" date="2007" name="Proc. Natl. Acad. Sci. U.S.A.">
        <title>Large-scale phosphorylation analysis of mouse liver.</title>
        <authorList>
            <person name="Villen J."/>
            <person name="Beausoleil S.A."/>
            <person name="Gerber S.A."/>
            <person name="Gygi S.P."/>
        </authorList>
    </citation>
    <scope>IDENTIFICATION BY MASS SPECTROMETRY [LARGE SCALE ANALYSIS]</scope>
    <source>
        <tissue>Liver</tissue>
    </source>
</reference>
<reference key="4">
    <citation type="journal article" date="2010" name="Cell">
        <title>A tissue-specific atlas of mouse protein phosphorylation and expression.</title>
        <authorList>
            <person name="Huttlin E.L."/>
            <person name="Jedrychowski M.P."/>
            <person name="Elias J.E."/>
            <person name="Goswami T."/>
            <person name="Rad R."/>
            <person name="Beausoleil S.A."/>
            <person name="Villen J."/>
            <person name="Haas W."/>
            <person name="Sowa M.E."/>
            <person name="Gygi S.P."/>
        </authorList>
    </citation>
    <scope>IDENTIFICATION BY MASS SPECTROMETRY [LARGE SCALE ANALYSIS]</scope>
    <source>
        <tissue>Brain</tissue>
        <tissue>Kidney</tissue>
        <tissue>Spleen</tissue>
        <tissue>Testis</tissue>
    </source>
</reference>
<reference key="5">
    <citation type="journal article" date="2013" name="Autophagy">
        <title>Recombinant protein rVP1 upregulates BECN1-independent autophagy, MAPK1/3 phosphorylation and MMP9 activity via WIPI1/WIPI2 to promote macrophage migration.</title>
        <authorList>
            <person name="Liao C.C."/>
            <person name="Ho M.Y."/>
            <person name="Liang S.M."/>
            <person name="Liang C.M."/>
        </authorList>
    </citation>
    <scope>FUNCTION</scope>
    <scope>SUBCELLULAR LOCATION</scope>
</reference>
<reference key="6">
    <citation type="journal article" date="2013" name="Autophagy">
        <title>Regulation of nutrient-sensitive autophagy by uncoordinated 51-like kinases 1 and 2.</title>
        <authorList>
            <person name="McAlpine F."/>
            <person name="Williamson L.E."/>
            <person name="Tooze S.A."/>
            <person name="Chan E.Y."/>
        </authorList>
    </citation>
    <scope>SUBCELLULAR LOCATION</scope>
    <scope>FUNCTION</scope>
</reference>
<reference key="7">
    <citation type="journal article" date="2014" name="Mol. Cell">
        <title>WIPI2 links LC3 conjugation with PI3P, autophagosome formation, and pathogen clearance by recruiting Atg12-5-16L1.</title>
        <authorList>
            <person name="Dooley H.C."/>
            <person name="Razi M."/>
            <person name="Polson H.E."/>
            <person name="Girardin S.E."/>
            <person name="Wilson M.I."/>
            <person name="Tooze S.A."/>
        </authorList>
    </citation>
    <scope>FUNCTION</scope>
    <scope>INTERACTION WITH ATG16L1</scope>
    <scope>SUBCELLULAR LOCATION</scope>
</reference>
<organism>
    <name type="scientific">Mus musculus</name>
    <name type="common">Mouse</name>
    <dbReference type="NCBI Taxonomy" id="10090"/>
    <lineage>
        <taxon>Eukaryota</taxon>
        <taxon>Metazoa</taxon>
        <taxon>Chordata</taxon>
        <taxon>Craniata</taxon>
        <taxon>Vertebrata</taxon>
        <taxon>Euteleostomi</taxon>
        <taxon>Mammalia</taxon>
        <taxon>Eutheria</taxon>
        <taxon>Euarchontoglires</taxon>
        <taxon>Glires</taxon>
        <taxon>Rodentia</taxon>
        <taxon>Myomorpha</taxon>
        <taxon>Muroidea</taxon>
        <taxon>Muridae</taxon>
        <taxon>Murinae</taxon>
        <taxon>Mus</taxon>
        <taxon>Mus</taxon>
    </lineage>
</organism>
<evidence type="ECO:0000250" key="1">
    <source>
        <dbReference type="UniProtKB" id="Q9Y4P8"/>
    </source>
</evidence>
<evidence type="ECO:0000255" key="2"/>
<evidence type="ECO:0000269" key="3">
    <source>
    </source>
</evidence>
<evidence type="ECO:0000269" key="4">
    <source>
    </source>
</evidence>
<evidence type="ECO:0000269" key="5">
    <source>
    </source>
</evidence>
<evidence type="ECO:0000303" key="6">
    <source>
    </source>
</evidence>
<evidence type="ECO:0000305" key="7"/>
<evidence type="ECO:0000312" key="8">
    <source>
        <dbReference type="MGI" id="MGI:1923831"/>
    </source>
</evidence>